<keyword id="KW-0150">Chloroplast</keyword>
<keyword id="KW-0934">Plastid</keyword>
<keyword id="KW-0687">Ribonucleoprotein</keyword>
<keyword id="KW-0689">Ribosomal protein</keyword>
<evidence type="ECO:0000255" key="1">
    <source>
        <dbReference type="HAMAP-Rule" id="MF_00251"/>
    </source>
</evidence>
<evidence type="ECO:0000305" key="2"/>
<geneLocation type="chloroplast"/>
<reference key="1">
    <citation type="journal article" date="2004" name="Mol. Biol. Evol.">
        <title>Chloroplast phylogeny indicates that bryophytes are monophyletic.</title>
        <authorList>
            <person name="Nishiyama T."/>
            <person name="Wolf P.G."/>
            <person name="Kugita M."/>
            <person name="Sinclair R.B."/>
            <person name="Sugita M."/>
            <person name="Sugiura C."/>
            <person name="Wakasugi T."/>
            <person name="Yamada K."/>
            <person name="Yoshinaga K."/>
            <person name="Yamaguchi K."/>
            <person name="Ueda K."/>
            <person name="Hasebe M."/>
        </authorList>
    </citation>
    <scope>NUCLEOTIDE SEQUENCE [LARGE SCALE GENOMIC DNA]</scope>
    <source>
        <strain>Kingyoku</strain>
    </source>
</reference>
<gene>
    <name evidence="1" type="primary">rpl36</name>
</gene>
<organism>
    <name type="scientific">Psilotum nudum</name>
    <name type="common">Whisk fern</name>
    <name type="synonym">Lycopodium nudum</name>
    <dbReference type="NCBI Taxonomy" id="3240"/>
    <lineage>
        <taxon>Eukaryota</taxon>
        <taxon>Viridiplantae</taxon>
        <taxon>Streptophyta</taxon>
        <taxon>Embryophyta</taxon>
        <taxon>Tracheophyta</taxon>
        <taxon>Polypodiopsida</taxon>
        <taxon>Ophioglossidae</taxon>
        <taxon>Psilotales</taxon>
        <taxon>Psilotaceae</taxon>
        <taxon>Psilotum</taxon>
    </lineage>
</organism>
<accession>Q8WHY9</accession>
<sequence>MKIRASVRKICEKCRLIRRRKRIMVICFNPKHKQKQG</sequence>
<feature type="chain" id="PRO_0000126342" description="Large ribosomal subunit protein bL36c">
    <location>
        <begin position="1"/>
        <end position="37"/>
    </location>
</feature>
<comment type="subcellular location">
    <subcellularLocation>
        <location>Plastid</location>
        <location>Chloroplast</location>
    </subcellularLocation>
</comment>
<comment type="similarity">
    <text evidence="1">Belongs to the bacterial ribosomal protein bL36 family.</text>
</comment>
<dbReference type="EMBL" id="AP004638">
    <property type="protein sequence ID" value="BAB84250.1"/>
    <property type="molecule type" value="Genomic_DNA"/>
</dbReference>
<dbReference type="RefSeq" id="NP_569662.1">
    <property type="nucleotide sequence ID" value="NC_003386.1"/>
</dbReference>
<dbReference type="SMR" id="Q8WHY9"/>
<dbReference type="GeneID" id="2545165"/>
<dbReference type="GO" id="GO:0009507">
    <property type="term" value="C:chloroplast"/>
    <property type="evidence" value="ECO:0007669"/>
    <property type="project" value="UniProtKB-SubCell"/>
</dbReference>
<dbReference type="GO" id="GO:1990904">
    <property type="term" value="C:ribonucleoprotein complex"/>
    <property type="evidence" value="ECO:0007669"/>
    <property type="project" value="UniProtKB-KW"/>
</dbReference>
<dbReference type="GO" id="GO:0005840">
    <property type="term" value="C:ribosome"/>
    <property type="evidence" value="ECO:0007669"/>
    <property type="project" value="UniProtKB-KW"/>
</dbReference>
<dbReference type="GO" id="GO:0003735">
    <property type="term" value="F:structural constituent of ribosome"/>
    <property type="evidence" value="ECO:0007669"/>
    <property type="project" value="InterPro"/>
</dbReference>
<dbReference type="GO" id="GO:0006412">
    <property type="term" value="P:translation"/>
    <property type="evidence" value="ECO:0007669"/>
    <property type="project" value="UniProtKB-UniRule"/>
</dbReference>
<dbReference type="HAMAP" id="MF_00251">
    <property type="entry name" value="Ribosomal_bL36"/>
    <property type="match status" value="1"/>
</dbReference>
<dbReference type="InterPro" id="IPR000473">
    <property type="entry name" value="Ribosomal_bL36"/>
</dbReference>
<dbReference type="InterPro" id="IPR035977">
    <property type="entry name" value="Ribosomal_bL36_sp"/>
</dbReference>
<dbReference type="NCBIfam" id="TIGR01022">
    <property type="entry name" value="rpmJ_bact"/>
    <property type="match status" value="1"/>
</dbReference>
<dbReference type="PANTHER" id="PTHR42888">
    <property type="entry name" value="50S RIBOSOMAL PROTEIN L36, CHLOROPLASTIC"/>
    <property type="match status" value="1"/>
</dbReference>
<dbReference type="PANTHER" id="PTHR42888:SF1">
    <property type="entry name" value="LARGE RIBOSOMAL SUBUNIT PROTEIN BL36C"/>
    <property type="match status" value="1"/>
</dbReference>
<dbReference type="Pfam" id="PF00444">
    <property type="entry name" value="Ribosomal_L36"/>
    <property type="match status" value="1"/>
</dbReference>
<dbReference type="SUPFAM" id="SSF57840">
    <property type="entry name" value="Ribosomal protein L36"/>
    <property type="match status" value="1"/>
</dbReference>
<dbReference type="PROSITE" id="PS00828">
    <property type="entry name" value="RIBOSOMAL_L36"/>
    <property type="match status" value="1"/>
</dbReference>
<protein>
    <recommendedName>
        <fullName evidence="1">Large ribosomal subunit protein bL36c</fullName>
    </recommendedName>
    <alternativeName>
        <fullName evidence="2">50S ribosomal protein L36, chloroplastic</fullName>
    </alternativeName>
</protein>
<name>RK36_PSINU</name>
<proteinExistence type="inferred from homology"/>